<dbReference type="EMBL" id="CP000768">
    <property type="protein sequence ID" value="ABS44789.1"/>
    <property type="molecule type" value="Genomic_DNA"/>
</dbReference>
<dbReference type="SMR" id="A7H623"/>
<dbReference type="KEGG" id="cjd:JJD26997_2047"/>
<dbReference type="HOGENOM" id="CLU_040469_1_2_7"/>
<dbReference type="Proteomes" id="UP000002302">
    <property type="component" value="Chromosome"/>
</dbReference>
<dbReference type="GO" id="GO:0005829">
    <property type="term" value="C:cytosol"/>
    <property type="evidence" value="ECO:0007669"/>
    <property type="project" value="TreeGrafter"/>
</dbReference>
<dbReference type="GO" id="GO:0005524">
    <property type="term" value="F:ATP binding"/>
    <property type="evidence" value="ECO:0007669"/>
    <property type="project" value="UniProtKB-UniRule"/>
</dbReference>
<dbReference type="GO" id="GO:0016887">
    <property type="term" value="F:ATP hydrolysis activity"/>
    <property type="evidence" value="ECO:0007669"/>
    <property type="project" value="InterPro"/>
</dbReference>
<dbReference type="GO" id="GO:0140664">
    <property type="term" value="F:ATP-dependent DNA damage sensor activity"/>
    <property type="evidence" value="ECO:0007669"/>
    <property type="project" value="InterPro"/>
</dbReference>
<dbReference type="GO" id="GO:0003684">
    <property type="term" value="F:damaged DNA binding"/>
    <property type="evidence" value="ECO:0007669"/>
    <property type="project" value="UniProtKB-UniRule"/>
</dbReference>
<dbReference type="GO" id="GO:0003697">
    <property type="term" value="F:single-stranded DNA binding"/>
    <property type="evidence" value="ECO:0007669"/>
    <property type="project" value="UniProtKB-UniRule"/>
</dbReference>
<dbReference type="GO" id="GO:0006310">
    <property type="term" value="P:DNA recombination"/>
    <property type="evidence" value="ECO:0007669"/>
    <property type="project" value="UniProtKB-UniRule"/>
</dbReference>
<dbReference type="GO" id="GO:0006281">
    <property type="term" value="P:DNA repair"/>
    <property type="evidence" value="ECO:0007669"/>
    <property type="project" value="UniProtKB-UniRule"/>
</dbReference>
<dbReference type="GO" id="GO:0009432">
    <property type="term" value="P:SOS response"/>
    <property type="evidence" value="ECO:0007669"/>
    <property type="project" value="UniProtKB-UniRule"/>
</dbReference>
<dbReference type="CDD" id="cd00983">
    <property type="entry name" value="RecA"/>
    <property type="match status" value="1"/>
</dbReference>
<dbReference type="FunFam" id="3.40.50.300:FF:000087">
    <property type="entry name" value="Recombinase RecA"/>
    <property type="match status" value="1"/>
</dbReference>
<dbReference type="Gene3D" id="3.40.50.300">
    <property type="entry name" value="P-loop containing nucleotide triphosphate hydrolases"/>
    <property type="match status" value="1"/>
</dbReference>
<dbReference type="HAMAP" id="MF_00268">
    <property type="entry name" value="RecA"/>
    <property type="match status" value="1"/>
</dbReference>
<dbReference type="InterPro" id="IPR003593">
    <property type="entry name" value="AAA+_ATPase"/>
</dbReference>
<dbReference type="InterPro" id="IPR013765">
    <property type="entry name" value="DNA_recomb/repair_RecA"/>
</dbReference>
<dbReference type="InterPro" id="IPR020584">
    <property type="entry name" value="DNA_recomb/repair_RecA_CS"/>
</dbReference>
<dbReference type="InterPro" id="IPR027417">
    <property type="entry name" value="P-loop_NTPase"/>
</dbReference>
<dbReference type="InterPro" id="IPR049261">
    <property type="entry name" value="RecA-like_C"/>
</dbReference>
<dbReference type="InterPro" id="IPR049428">
    <property type="entry name" value="RecA-like_N"/>
</dbReference>
<dbReference type="InterPro" id="IPR020588">
    <property type="entry name" value="RecA_ATP-bd"/>
</dbReference>
<dbReference type="InterPro" id="IPR023400">
    <property type="entry name" value="RecA_C_sf"/>
</dbReference>
<dbReference type="InterPro" id="IPR020587">
    <property type="entry name" value="RecA_monomer-monomer_interface"/>
</dbReference>
<dbReference type="NCBIfam" id="TIGR02012">
    <property type="entry name" value="tigrfam_recA"/>
    <property type="match status" value="1"/>
</dbReference>
<dbReference type="PANTHER" id="PTHR45900:SF1">
    <property type="entry name" value="MITOCHONDRIAL DNA REPAIR PROTEIN RECA HOMOLOG-RELATED"/>
    <property type="match status" value="1"/>
</dbReference>
<dbReference type="PANTHER" id="PTHR45900">
    <property type="entry name" value="RECA"/>
    <property type="match status" value="1"/>
</dbReference>
<dbReference type="Pfam" id="PF00154">
    <property type="entry name" value="RecA"/>
    <property type="match status" value="1"/>
</dbReference>
<dbReference type="Pfam" id="PF21096">
    <property type="entry name" value="RecA_C"/>
    <property type="match status" value="1"/>
</dbReference>
<dbReference type="PRINTS" id="PR00142">
    <property type="entry name" value="RECA"/>
</dbReference>
<dbReference type="SMART" id="SM00382">
    <property type="entry name" value="AAA"/>
    <property type="match status" value="1"/>
</dbReference>
<dbReference type="SUPFAM" id="SSF52540">
    <property type="entry name" value="P-loop containing nucleoside triphosphate hydrolases"/>
    <property type="match status" value="1"/>
</dbReference>
<dbReference type="SUPFAM" id="SSF54752">
    <property type="entry name" value="RecA protein, C-terminal domain"/>
    <property type="match status" value="1"/>
</dbReference>
<dbReference type="PROSITE" id="PS00321">
    <property type="entry name" value="RECA_1"/>
    <property type="match status" value="1"/>
</dbReference>
<dbReference type="PROSITE" id="PS50162">
    <property type="entry name" value="RECA_2"/>
    <property type="match status" value="1"/>
</dbReference>
<dbReference type="PROSITE" id="PS50163">
    <property type="entry name" value="RECA_3"/>
    <property type="match status" value="1"/>
</dbReference>
<accession>A7H623</accession>
<evidence type="ECO:0000255" key="1">
    <source>
        <dbReference type="HAMAP-Rule" id="MF_00268"/>
    </source>
</evidence>
<feature type="chain" id="PRO_1000047897" description="Protein RecA">
    <location>
        <begin position="1"/>
        <end position="343"/>
    </location>
</feature>
<feature type="binding site" evidence="1">
    <location>
        <begin position="65"/>
        <end position="72"/>
    </location>
    <ligand>
        <name>ATP</name>
        <dbReference type="ChEBI" id="CHEBI:30616"/>
    </ligand>
</feature>
<comment type="function">
    <text evidence="1">Can catalyze the hydrolysis of ATP in the presence of single-stranded DNA, the ATP-dependent uptake of single-stranded DNA by duplex DNA, and the ATP-dependent hybridization of homologous single-stranded DNAs. It interacts with LexA causing its activation and leading to its autocatalytic cleavage.</text>
</comment>
<comment type="subcellular location">
    <subcellularLocation>
        <location evidence="1">Cytoplasm</location>
    </subcellularLocation>
</comment>
<comment type="similarity">
    <text evidence="1">Belongs to the RecA family.</text>
</comment>
<keyword id="KW-0067">ATP-binding</keyword>
<keyword id="KW-0963">Cytoplasm</keyword>
<keyword id="KW-0227">DNA damage</keyword>
<keyword id="KW-0233">DNA recombination</keyword>
<keyword id="KW-0234">DNA repair</keyword>
<keyword id="KW-0238">DNA-binding</keyword>
<keyword id="KW-0547">Nucleotide-binding</keyword>
<keyword id="KW-0742">SOS response</keyword>
<name>RECA_CAMJD</name>
<organism>
    <name type="scientific">Campylobacter jejuni subsp. doylei (strain ATCC BAA-1458 / RM4099 / 269.97)</name>
    <dbReference type="NCBI Taxonomy" id="360109"/>
    <lineage>
        <taxon>Bacteria</taxon>
        <taxon>Pseudomonadati</taxon>
        <taxon>Campylobacterota</taxon>
        <taxon>Epsilonproteobacteria</taxon>
        <taxon>Campylobacterales</taxon>
        <taxon>Campylobacteraceae</taxon>
        <taxon>Campylobacter</taxon>
    </lineage>
</organism>
<gene>
    <name evidence="1" type="primary">recA</name>
    <name type="ordered locus">JJD26997_2047</name>
</gene>
<reference key="1">
    <citation type="submission" date="2007-07" db="EMBL/GenBank/DDBJ databases">
        <title>Complete genome sequence of Campylobacter jejuni subsp doylei 269.97 isolated from human blood.</title>
        <authorList>
            <person name="Fouts D.E."/>
            <person name="Mongodin E.F."/>
            <person name="Puiu D."/>
            <person name="Sebastian Y."/>
            <person name="Miller W.G."/>
            <person name="Mandrell R.E."/>
            <person name="Lastovica A.J."/>
            <person name="Nelson K.E."/>
        </authorList>
    </citation>
    <scope>NUCLEOTIDE SEQUENCE [LARGE SCALE GENOMIC DNA]</scope>
    <source>
        <strain>ATCC BAA-1458 / RM4099 / 269.97</strain>
    </source>
</reference>
<sequence>MDDNKRKSLDAALKSLDKTFGKGTILRLGDKEVEQIDSIGTGSVGLDLALGIGGIPKGRIVEIYGPESSGKTTLTLHIIAECQKAGGVCAFIDAEHALDVKYAKNLGVNTDDLYVSQPDFGEQALEIVETIARSGAVDLIVVDSVAALTPKAEIEGDMGDQHVGLQARLMSQALRKLTGIVHKMNTTVIFINQIRIKIGATGYGTPETTTGGNALKFYASVRLDVRKIATLKQNEEPIGNRVKVKVVKNKVAPPFRQAEFDVMFGEGLSREGELIDYGVKLDIVDKSGAWFSYKDKKLGQGRENSKAFLKENPEIADEITKAIQNSMGIEGMISGSEDDEGEE</sequence>
<protein>
    <recommendedName>
        <fullName evidence="1">Protein RecA</fullName>
    </recommendedName>
    <alternativeName>
        <fullName evidence="1">Recombinase A</fullName>
    </alternativeName>
</protein>
<proteinExistence type="inferred from homology"/>